<accession>D5ANS3</accession>
<accession>P26237</accession>
<comment type="function">
    <text evidence="2">Component of the dark-operative protochlorophyllide reductase (DPOR) that uses Mg-ATP and reduced ferredoxin to reduce ring D of protochlorophyllide (Pchlide) to form chlorophyllide a (Chlide). This reaction is light-independent. The L component serves as a unique electron donor to the NB-component of the complex, and binds Mg-ATP.</text>
</comment>
<comment type="catalytic activity">
    <reaction evidence="1 2 3">
        <text>chlorophyllide a + oxidized 2[4Fe-4S]-[ferredoxin] + 2 ADP + 2 phosphate = protochlorophyllide a + reduced 2[4Fe-4S]-[ferredoxin] + 2 ATP + 2 H2O</text>
        <dbReference type="Rhea" id="RHEA:28202"/>
        <dbReference type="Rhea" id="RHEA-COMP:10002"/>
        <dbReference type="Rhea" id="RHEA-COMP:10004"/>
        <dbReference type="ChEBI" id="CHEBI:15377"/>
        <dbReference type="ChEBI" id="CHEBI:30616"/>
        <dbReference type="ChEBI" id="CHEBI:33722"/>
        <dbReference type="ChEBI" id="CHEBI:33723"/>
        <dbReference type="ChEBI" id="CHEBI:43474"/>
        <dbReference type="ChEBI" id="CHEBI:83348"/>
        <dbReference type="ChEBI" id="CHEBI:83350"/>
        <dbReference type="ChEBI" id="CHEBI:456216"/>
        <dbReference type="EC" id="1.3.7.7"/>
    </reaction>
</comment>
<comment type="cofactor">
    <cofactor evidence="4">
        <name>[4Fe-4S] cluster</name>
        <dbReference type="ChEBI" id="CHEBI:49883"/>
    </cofactor>
    <text evidence="4">Binds 1 [4Fe-4S] cluster per dimer.</text>
</comment>
<comment type="pathway">
    <text evidence="1">Porphyrin-containing compound metabolism; bacteriochlorophyll biosynthesis (light-independent).</text>
</comment>
<comment type="subunit">
    <text evidence="3">Homodimer. Protochlorophyllide reductase is composed of three subunits; BchL, BchN and BchB.</text>
</comment>
<comment type="similarity">
    <text evidence="1">Belongs to the NifH/BchL/ChlL family.</text>
</comment>
<dbReference type="EC" id="1.3.7.7" evidence="1 2"/>
<dbReference type="EMBL" id="Z11165">
    <property type="protein sequence ID" value="CAA77523.1"/>
    <property type="molecule type" value="Genomic_DNA"/>
</dbReference>
<dbReference type="EMBL" id="CP001312">
    <property type="protein sequence ID" value="ADE84427.1"/>
    <property type="molecule type" value="Genomic_DNA"/>
</dbReference>
<dbReference type="EMBL" id="M34843">
    <property type="protein sequence ID" value="AAA26098.1"/>
    <property type="molecule type" value="Genomic_DNA"/>
</dbReference>
<dbReference type="PIR" id="B36716">
    <property type="entry name" value="B36716"/>
</dbReference>
<dbReference type="RefSeq" id="WP_013066406.1">
    <property type="nucleotide sequence ID" value="NC_014034.1"/>
</dbReference>
<dbReference type="SMR" id="D5ANS3"/>
<dbReference type="STRING" id="272942.RCAP_rcc00662"/>
<dbReference type="GeneID" id="31489608"/>
<dbReference type="KEGG" id="rcp:RCAP_rcc00662"/>
<dbReference type="eggNOG" id="COG1348">
    <property type="taxonomic scope" value="Bacteria"/>
</dbReference>
<dbReference type="HOGENOM" id="CLU_059373_2_0_5"/>
<dbReference type="OrthoDB" id="9778641at2"/>
<dbReference type="BRENDA" id="1.3.7.7">
    <property type="organism ID" value="5381"/>
</dbReference>
<dbReference type="UniPathway" id="UPA00671"/>
<dbReference type="Proteomes" id="UP000002361">
    <property type="component" value="Chromosome"/>
</dbReference>
<dbReference type="GO" id="GO:0051539">
    <property type="term" value="F:4 iron, 4 sulfur cluster binding"/>
    <property type="evidence" value="ECO:0007669"/>
    <property type="project" value="UniProtKB-UniRule"/>
</dbReference>
<dbReference type="GO" id="GO:0005524">
    <property type="term" value="F:ATP binding"/>
    <property type="evidence" value="ECO:0007669"/>
    <property type="project" value="UniProtKB-UniRule"/>
</dbReference>
<dbReference type="GO" id="GO:0046872">
    <property type="term" value="F:metal ion binding"/>
    <property type="evidence" value="ECO:0007669"/>
    <property type="project" value="UniProtKB-KW"/>
</dbReference>
<dbReference type="GO" id="GO:0016730">
    <property type="term" value="F:oxidoreductase activity, acting on iron-sulfur proteins as donors"/>
    <property type="evidence" value="ECO:0007669"/>
    <property type="project" value="InterPro"/>
</dbReference>
<dbReference type="GO" id="GO:0016636">
    <property type="term" value="F:oxidoreductase activity, acting on the CH-CH group of donors, iron-sulfur protein as acceptor"/>
    <property type="evidence" value="ECO:0007669"/>
    <property type="project" value="UniProtKB-UniRule"/>
</dbReference>
<dbReference type="GO" id="GO:0036070">
    <property type="term" value="P:light-independent bacteriochlorophyll biosynthetic process"/>
    <property type="evidence" value="ECO:0007669"/>
    <property type="project" value="UniProtKB-UniRule"/>
</dbReference>
<dbReference type="GO" id="GO:0019685">
    <property type="term" value="P:photosynthesis, dark reaction"/>
    <property type="evidence" value="ECO:0007669"/>
    <property type="project" value="InterPro"/>
</dbReference>
<dbReference type="CDD" id="cd02032">
    <property type="entry name" value="Bchl-like"/>
    <property type="match status" value="1"/>
</dbReference>
<dbReference type="Gene3D" id="3.40.50.300">
    <property type="entry name" value="P-loop containing nucleotide triphosphate hydrolases"/>
    <property type="match status" value="1"/>
</dbReference>
<dbReference type="HAMAP" id="MF_00355">
    <property type="entry name" value="ChlL_BchL"/>
    <property type="match status" value="1"/>
</dbReference>
<dbReference type="InterPro" id="IPR030655">
    <property type="entry name" value="NifH/chlL_CS"/>
</dbReference>
<dbReference type="InterPro" id="IPR000392">
    <property type="entry name" value="NifH/frxC"/>
</dbReference>
<dbReference type="InterPro" id="IPR027417">
    <property type="entry name" value="P-loop_NTPase"/>
</dbReference>
<dbReference type="InterPro" id="IPR005971">
    <property type="entry name" value="Protochlorophyllide_ATP-bd"/>
</dbReference>
<dbReference type="NCBIfam" id="TIGR01281">
    <property type="entry name" value="DPOR_bchL"/>
    <property type="match status" value="1"/>
</dbReference>
<dbReference type="PANTHER" id="PTHR42864">
    <property type="entry name" value="LIGHT-INDEPENDENT PROTOCHLOROPHYLLIDE REDUCTASE IRON-SULFUR ATP-BINDING PROTEIN"/>
    <property type="match status" value="1"/>
</dbReference>
<dbReference type="PANTHER" id="PTHR42864:SF2">
    <property type="entry name" value="LIGHT-INDEPENDENT PROTOCHLOROPHYLLIDE REDUCTASE IRON-SULFUR ATP-BINDING PROTEIN"/>
    <property type="match status" value="1"/>
</dbReference>
<dbReference type="Pfam" id="PF00142">
    <property type="entry name" value="Fer4_NifH"/>
    <property type="match status" value="1"/>
</dbReference>
<dbReference type="PIRSF" id="PIRSF000363">
    <property type="entry name" value="Nitrogenase_iron"/>
    <property type="match status" value="1"/>
</dbReference>
<dbReference type="PRINTS" id="PR00091">
    <property type="entry name" value="NITROGNASEII"/>
</dbReference>
<dbReference type="SUPFAM" id="SSF52540">
    <property type="entry name" value="P-loop containing nucleoside triphosphate hydrolases"/>
    <property type="match status" value="1"/>
</dbReference>
<dbReference type="PROSITE" id="PS00746">
    <property type="entry name" value="NIFH_FRXC_1"/>
    <property type="match status" value="1"/>
</dbReference>
<dbReference type="PROSITE" id="PS00692">
    <property type="entry name" value="NIFH_FRXC_2"/>
    <property type="match status" value="1"/>
</dbReference>
<dbReference type="PROSITE" id="PS51026">
    <property type="entry name" value="NIFH_FRXC_3"/>
    <property type="match status" value="1"/>
</dbReference>
<gene>
    <name evidence="1" type="primary">bchL</name>
    <name type="ordered locus">RCAP_rcc00662</name>
</gene>
<reference key="1">
    <citation type="submission" date="1991-11" db="EMBL/GenBank/DDBJ databases">
        <authorList>
            <person name="Burke D.H."/>
            <person name="Alberti M."/>
            <person name="Armstrong G.A."/>
            <person name="Hearst J.E."/>
        </authorList>
    </citation>
    <scope>NUCLEOTIDE SEQUENCE [GENOMIC DNA]</scope>
    <source>
        <strain>ATCC BAA-309 / NBRC 16581 / SB1003</strain>
    </source>
</reference>
<reference key="2">
    <citation type="journal article" date="2010" name="J. Bacteriol.">
        <title>Complete genome sequence of the photosynthetic purple nonsulfur bacterium Rhodobacter capsulatus SB 1003.</title>
        <authorList>
            <person name="Strnad H."/>
            <person name="Lapidus A."/>
            <person name="Paces J."/>
            <person name="Ulbrich P."/>
            <person name="Vlcek C."/>
            <person name="Paces V."/>
            <person name="Haselkorn R."/>
        </authorList>
    </citation>
    <scope>NUCLEOTIDE SEQUENCE [LARGE SCALE GENOMIC DNA]</scope>
    <source>
        <strain>ATCC BAA-309 / NBRC 16581 / SB1003</strain>
    </source>
</reference>
<reference key="3">
    <citation type="journal article" date="1990" name="J. Bacteriol.">
        <title>Rhodobacter capsulatus genes involved in early steps of the bacteriochlorophyll biosynthetic pathway.</title>
        <authorList>
            <person name="Yang Z.M."/>
            <person name="Bauer C.E."/>
        </authorList>
    </citation>
    <scope>NUCLEOTIDE SEQUENCE [GENOMIC DNA] OF 1-69</scope>
    <source>
        <strain>ATCC BAA-309 / NBRC 16581 / SB1003</strain>
    </source>
</reference>
<reference key="4">
    <citation type="journal article" date="2000" name="J. Biol. Chem.">
        <title>Reconstitution of light-independent protochlorophyllide reductase from purified bchL and bchN-bchB subunits. In vitro confirmation of nitrogenase-like features of a bacteriochlorophyll biosynthesis enzyme.</title>
        <authorList>
            <person name="Fujita Y."/>
            <person name="Bauer C.E."/>
        </authorList>
    </citation>
    <scope>FUNCTION</scope>
    <scope>CATALYTIC ACTIVITY</scope>
    <scope>CHARACTERIZATION</scope>
    <source>
        <strain>SB1003 / CB1029</strain>
    </source>
</reference>
<reference key="5">
    <citation type="journal article" date="2005" name="Biochim. Biophys. Acta">
        <title>Overexpression and characterization of dark-operative protochlorophyllide reductase from Rhodobacter capsulatus.</title>
        <authorList>
            <person name="Nomata J."/>
            <person name="Swem L.R."/>
            <person name="Bauer C.E."/>
            <person name="Fujita Y."/>
        </authorList>
    </citation>
    <scope>CATALYTIC ACTIVITY</scope>
    <scope>SUBUNIT</scope>
</reference>
<reference key="6">
    <citation type="journal article" date="2006" name="FEBS Lett.">
        <title>Nitrogenase Fe protein-like Fe-S cluster is conserved in L-protein (BchL) of dark-operative protochlorophyllide reductase from Rhodobacter capsulatus.</title>
        <authorList>
            <person name="Nomata J."/>
            <person name="Kitashima M."/>
            <person name="Inoue K."/>
            <person name="Fujita Y."/>
        </authorList>
    </citation>
    <scope>CHARACTERIZATION</scope>
    <scope>COFACTOR</scope>
    <scope>IRON-SULFUR CLUSTER</scope>
</reference>
<evidence type="ECO:0000255" key="1">
    <source>
        <dbReference type="HAMAP-Rule" id="MF_00355"/>
    </source>
</evidence>
<evidence type="ECO:0000269" key="2">
    <source>
    </source>
</evidence>
<evidence type="ECO:0000269" key="3">
    <source>
    </source>
</evidence>
<evidence type="ECO:0000269" key="4">
    <source>
    </source>
</evidence>
<evidence type="ECO:0000305" key="5"/>
<keyword id="KW-0004">4Fe-4S</keyword>
<keyword id="KW-0067">ATP-binding</keyword>
<keyword id="KW-0077">Bacteriochlorophyll biosynthesis</keyword>
<keyword id="KW-0149">Chlorophyll biosynthesis</keyword>
<keyword id="KW-0408">Iron</keyword>
<keyword id="KW-0411">Iron-sulfur</keyword>
<keyword id="KW-0460">Magnesium</keyword>
<keyword id="KW-0479">Metal-binding</keyword>
<keyword id="KW-0547">Nucleotide-binding</keyword>
<keyword id="KW-0560">Oxidoreductase</keyword>
<keyword id="KW-0602">Photosynthesis</keyword>
<keyword id="KW-1185">Reference proteome</keyword>
<sequence length="304" mass="33205">MSPRDDIPDLKGFDGDGEGSVQVHDSEDIGLDVGGARVFSVYGKGGIGKSTTSSNLSAAFSLLGKRVLQIGCDPKHDSTFTLTGRLQETVIDILKQVNFHPEELRPEDYVTEGFNGVMCVEAGGPPAGTGCGGYVVGQTVKLLKQHHLLEDTDVVVFDVLGDVVCGGFAAPLQHADRALIVTANDFDSIYAMNRIIAAVQAKSVNYKVRLAGCVANRSRETNEVDRYCEAANFKRIAHMPDLDSIRRSRLKKRTLFEMDDAEDVVMARAEYIRLAETLWRSTGEPGLTPEPLTDRHIFELLGFD</sequence>
<proteinExistence type="evidence at protein level"/>
<name>BCHL_RHOCB</name>
<protein>
    <recommendedName>
        <fullName evidence="1">Light-independent protochlorophyllide reductase iron-sulfur ATP-binding protein</fullName>
        <shortName evidence="1">DPOR subunit L</shortName>
        <shortName evidence="1">LI-POR subunit L</shortName>
        <ecNumber evidence="1 2">1.3.7.7</ecNumber>
    </recommendedName>
</protein>
<organism>
    <name type="scientific">Rhodobacter capsulatus (strain ATCC BAA-309 / NBRC 16581 / SB1003)</name>
    <dbReference type="NCBI Taxonomy" id="272942"/>
    <lineage>
        <taxon>Bacteria</taxon>
        <taxon>Pseudomonadati</taxon>
        <taxon>Pseudomonadota</taxon>
        <taxon>Alphaproteobacteria</taxon>
        <taxon>Rhodobacterales</taxon>
        <taxon>Rhodobacter group</taxon>
        <taxon>Rhodobacter</taxon>
    </lineage>
</organism>
<feature type="chain" id="PRO_0000409926" description="Light-independent protochlorophyllide reductase iron-sulfur ATP-binding protein">
    <location>
        <begin position="1"/>
        <end position="304"/>
    </location>
</feature>
<feature type="binding site" evidence="1">
    <location>
        <begin position="46"/>
        <end position="51"/>
    </location>
    <ligand>
        <name>ATP</name>
        <dbReference type="ChEBI" id="CHEBI:30616"/>
    </ligand>
</feature>
<feature type="binding site" evidence="1">
    <location>
        <position position="50"/>
    </location>
    <ligand>
        <name>Mg(2+)</name>
        <dbReference type="ChEBI" id="CHEBI:18420"/>
    </ligand>
</feature>
<feature type="binding site" evidence="1">
    <location>
        <position position="75"/>
    </location>
    <ligand>
        <name>ATP</name>
        <dbReference type="ChEBI" id="CHEBI:30616"/>
    </ligand>
</feature>
<feature type="binding site" evidence="5">
    <location>
        <position position="131"/>
    </location>
    <ligand>
        <name>[4Fe-4S] cluster</name>
        <dbReference type="ChEBI" id="CHEBI:49883"/>
        <note>ligand shared between dimeric partners</note>
    </ligand>
</feature>
<feature type="binding site" evidence="5">
    <location>
        <position position="165"/>
    </location>
    <ligand>
        <name>[4Fe-4S] cluster</name>
        <dbReference type="ChEBI" id="CHEBI:49883"/>
        <note>ligand shared between dimeric partners</note>
    </ligand>
</feature>
<feature type="binding site" evidence="1">
    <location>
        <begin position="216"/>
        <end position="217"/>
    </location>
    <ligand>
        <name>ATP</name>
        <dbReference type="ChEBI" id="CHEBI:30616"/>
    </ligand>
</feature>
<feature type="binding site" evidence="1">
    <location>
        <begin position="240"/>
        <end position="242"/>
    </location>
    <ligand>
        <name>ATP</name>
        <dbReference type="ChEBI" id="CHEBI:30616"/>
    </ligand>
</feature>